<dbReference type="EC" id="5.3.1.5" evidence="1"/>
<dbReference type="EMBL" id="CP000271">
    <property type="protein sequence ID" value="ABE33371.1"/>
    <property type="molecule type" value="Genomic_DNA"/>
</dbReference>
<dbReference type="RefSeq" id="WP_011490740.1">
    <property type="nucleotide sequence ID" value="NC_007952.1"/>
</dbReference>
<dbReference type="SMR" id="Q13RB8"/>
<dbReference type="STRING" id="266265.Bxe_B2622"/>
<dbReference type="KEGG" id="bxb:DR64_4955"/>
<dbReference type="KEGG" id="bxe:Bxe_B2622"/>
<dbReference type="PATRIC" id="fig|266265.5.peg.5079"/>
<dbReference type="eggNOG" id="COG2115">
    <property type="taxonomic scope" value="Bacteria"/>
</dbReference>
<dbReference type="OrthoDB" id="9763981at2"/>
<dbReference type="Proteomes" id="UP000001817">
    <property type="component" value="Chromosome 2"/>
</dbReference>
<dbReference type="GO" id="GO:0005737">
    <property type="term" value="C:cytoplasm"/>
    <property type="evidence" value="ECO:0007669"/>
    <property type="project" value="UniProtKB-SubCell"/>
</dbReference>
<dbReference type="GO" id="GO:0000287">
    <property type="term" value="F:magnesium ion binding"/>
    <property type="evidence" value="ECO:0007669"/>
    <property type="project" value="UniProtKB-UniRule"/>
</dbReference>
<dbReference type="GO" id="GO:0009045">
    <property type="term" value="F:xylose isomerase activity"/>
    <property type="evidence" value="ECO:0007669"/>
    <property type="project" value="UniProtKB-UniRule"/>
</dbReference>
<dbReference type="GO" id="GO:0042732">
    <property type="term" value="P:D-xylose metabolic process"/>
    <property type="evidence" value="ECO:0007669"/>
    <property type="project" value="UniProtKB-UniRule"/>
</dbReference>
<dbReference type="FunFam" id="3.20.20.150:FF:000002">
    <property type="entry name" value="Xylose isomerase"/>
    <property type="match status" value="1"/>
</dbReference>
<dbReference type="Gene3D" id="3.20.20.150">
    <property type="entry name" value="Divalent-metal-dependent TIM barrel enzymes"/>
    <property type="match status" value="1"/>
</dbReference>
<dbReference type="HAMAP" id="MF_00455">
    <property type="entry name" value="Xylose_isom_A"/>
    <property type="match status" value="1"/>
</dbReference>
<dbReference type="InterPro" id="IPR036237">
    <property type="entry name" value="Xyl_isomerase-like_sf"/>
</dbReference>
<dbReference type="InterPro" id="IPR013022">
    <property type="entry name" value="Xyl_isomerase-like_TIM-brl"/>
</dbReference>
<dbReference type="InterPro" id="IPR013452">
    <property type="entry name" value="Xylose_isom_bac"/>
</dbReference>
<dbReference type="InterPro" id="IPR001998">
    <property type="entry name" value="Xylose_isomerase"/>
</dbReference>
<dbReference type="NCBIfam" id="NF003998">
    <property type="entry name" value="PRK05474.1"/>
    <property type="match status" value="1"/>
</dbReference>
<dbReference type="NCBIfam" id="TIGR02630">
    <property type="entry name" value="xylose_isom_A"/>
    <property type="match status" value="1"/>
</dbReference>
<dbReference type="PANTHER" id="PTHR48408">
    <property type="match status" value="1"/>
</dbReference>
<dbReference type="PANTHER" id="PTHR48408:SF1">
    <property type="entry name" value="XYLOSE ISOMERASE"/>
    <property type="match status" value="1"/>
</dbReference>
<dbReference type="Pfam" id="PF01261">
    <property type="entry name" value="AP_endonuc_2"/>
    <property type="match status" value="1"/>
</dbReference>
<dbReference type="PRINTS" id="PR00688">
    <property type="entry name" value="XYLOSISMRASE"/>
</dbReference>
<dbReference type="SUPFAM" id="SSF51658">
    <property type="entry name" value="Xylose isomerase-like"/>
    <property type="match status" value="1"/>
</dbReference>
<dbReference type="PROSITE" id="PS51415">
    <property type="entry name" value="XYLOSE_ISOMERASE"/>
    <property type="match status" value="1"/>
</dbReference>
<evidence type="ECO:0000255" key="1">
    <source>
        <dbReference type="HAMAP-Rule" id="MF_00455"/>
    </source>
</evidence>
<feature type="chain" id="PRO_1000026437" description="Xylose isomerase">
    <location>
        <begin position="1"/>
        <end position="440"/>
    </location>
</feature>
<feature type="active site" evidence="1">
    <location>
        <position position="100"/>
    </location>
</feature>
<feature type="active site" evidence="1">
    <location>
        <position position="103"/>
    </location>
</feature>
<feature type="binding site" evidence="1">
    <location>
        <position position="231"/>
    </location>
    <ligand>
        <name>Mg(2+)</name>
        <dbReference type="ChEBI" id="CHEBI:18420"/>
        <label>1</label>
    </ligand>
</feature>
<feature type="binding site" evidence="1">
    <location>
        <position position="267"/>
    </location>
    <ligand>
        <name>Mg(2+)</name>
        <dbReference type="ChEBI" id="CHEBI:18420"/>
        <label>1</label>
    </ligand>
</feature>
<feature type="binding site" evidence="1">
    <location>
        <position position="267"/>
    </location>
    <ligand>
        <name>Mg(2+)</name>
        <dbReference type="ChEBI" id="CHEBI:18420"/>
        <label>2</label>
    </ligand>
</feature>
<feature type="binding site" evidence="1">
    <location>
        <position position="270"/>
    </location>
    <ligand>
        <name>Mg(2+)</name>
        <dbReference type="ChEBI" id="CHEBI:18420"/>
        <label>2</label>
    </ligand>
</feature>
<feature type="binding site" evidence="1">
    <location>
        <position position="295"/>
    </location>
    <ligand>
        <name>Mg(2+)</name>
        <dbReference type="ChEBI" id="CHEBI:18420"/>
        <label>1</label>
    </ligand>
</feature>
<feature type="binding site" evidence="1">
    <location>
        <position position="306"/>
    </location>
    <ligand>
        <name>Mg(2+)</name>
        <dbReference type="ChEBI" id="CHEBI:18420"/>
        <label>2</label>
    </ligand>
</feature>
<feature type="binding site" evidence="1">
    <location>
        <position position="308"/>
    </location>
    <ligand>
        <name>Mg(2+)</name>
        <dbReference type="ChEBI" id="CHEBI:18420"/>
        <label>2</label>
    </ligand>
</feature>
<feature type="binding site" evidence="1">
    <location>
        <position position="338"/>
    </location>
    <ligand>
        <name>Mg(2+)</name>
        <dbReference type="ChEBI" id="CHEBI:18420"/>
        <label>1</label>
    </ligand>
</feature>
<accession>Q13RB8</accession>
<organism>
    <name type="scientific">Paraburkholderia xenovorans (strain LB400)</name>
    <dbReference type="NCBI Taxonomy" id="266265"/>
    <lineage>
        <taxon>Bacteria</taxon>
        <taxon>Pseudomonadati</taxon>
        <taxon>Pseudomonadota</taxon>
        <taxon>Betaproteobacteria</taxon>
        <taxon>Burkholderiales</taxon>
        <taxon>Burkholderiaceae</taxon>
        <taxon>Paraburkholderia</taxon>
    </lineage>
</organism>
<reference key="1">
    <citation type="journal article" date="2006" name="Proc. Natl. Acad. Sci. U.S.A.">
        <title>Burkholderia xenovorans LB400 harbors a multi-replicon, 9.73-Mbp genome shaped for versatility.</title>
        <authorList>
            <person name="Chain P.S.G."/>
            <person name="Denef V.J."/>
            <person name="Konstantinidis K.T."/>
            <person name="Vergez L.M."/>
            <person name="Agullo L."/>
            <person name="Reyes V.L."/>
            <person name="Hauser L."/>
            <person name="Cordova M."/>
            <person name="Gomez L."/>
            <person name="Gonzalez M."/>
            <person name="Land M."/>
            <person name="Lao V."/>
            <person name="Larimer F."/>
            <person name="LiPuma J.J."/>
            <person name="Mahenthiralingam E."/>
            <person name="Malfatti S.A."/>
            <person name="Marx C.J."/>
            <person name="Parnell J.J."/>
            <person name="Ramette A."/>
            <person name="Richardson P."/>
            <person name="Seeger M."/>
            <person name="Smith D."/>
            <person name="Spilker T."/>
            <person name="Sul W.J."/>
            <person name="Tsoi T.V."/>
            <person name="Ulrich L.E."/>
            <person name="Zhulin I.B."/>
            <person name="Tiedje J.M."/>
        </authorList>
    </citation>
    <scope>NUCLEOTIDE SEQUENCE [LARGE SCALE GENOMIC DNA]</scope>
    <source>
        <strain>LB400</strain>
    </source>
</reference>
<proteinExistence type="inferred from homology"/>
<comment type="catalytic activity">
    <reaction evidence="1">
        <text>alpha-D-xylose = alpha-D-xylulofuranose</text>
        <dbReference type="Rhea" id="RHEA:22816"/>
        <dbReference type="ChEBI" id="CHEBI:28518"/>
        <dbReference type="ChEBI" id="CHEBI:188998"/>
        <dbReference type="EC" id="5.3.1.5"/>
    </reaction>
</comment>
<comment type="cofactor">
    <cofactor evidence="1">
        <name>Mg(2+)</name>
        <dbReference type="ChEBI" id="CHEBI:18420"/>
    </cofactor>
    <text evidence="1">Binds 2 magnesium ions per subunit.</text>
</comment>
<comment type="subunit">
    <text evidence="1">Homotetramer.</text>
</comment>
<comment type="subcellular location">
    <subcellularLocation>
        <location evidence="1">Cytoplasm</location>
    </subcellularLocation>
</comment>
<comment type="similarity">
    <text evidence="1">Belongs to the xylose isomerase family.</text>
</comment>
<name>XYLA_PARXL</name>
<gene>
    <name evidence="1" type="primary">xylA</name>
    <name type="ordered locus">Bxeno_B0403</name>
    <name type="ORF">Bxe_B2622</name>
</gene>
<keyword id="KW-0119">Carbohydrate metabolism</keyword>
<keyword id="KW-0963">Cytoplasm</keyword>
<keyword id="KW-0413">Isomerase</keyword>
<keyword id="KW-0460">Magnesium</keyword>
<keyword id="KW-0479">Metal-binding</keyword>
<keyword id="KW-1185">Reference proteome</keyword>
<keyword id="KW-0859">Xylose metabolism</keyword>
<protein>
    <recommendedName>
        <fullName evidence="1">Xylose isomerase</fullName>
        <ecNumber evidence="1">5.3.1.5</ecNumber>
    </recommendedName>
</protein>
<sequence>MSYFEHIPEIRYEGPQSDNPLAYRHYDKSKKVLGKTLEEHLRIAVCYWHTFVWPGVDIFGQGTFRRPWQQAGDAMERARQKADSAFEFFSKLGTPYYTFHDTDVSPEGSSLKEYSENFLRITDYLARKQEDTGIKLLWGTANLFSHPRYAAGAATSPDPEVFAFAATQVRHALDATQRLGGDNYVLWGGREGYDTLLNTDLMRERDQLARFLHMVVDHAHKIGFKGSLLIEPKPQEPTKHQYDYDVATVHGFLLQHGLEKEIRVNIEANHATLAGHSFHHEIATAYALGIFGSVDANRGDPQNGWDTDQFPNSVEELTLAFYEILKHGGFTTGGMNFDSKVRRQSVDPEDLFYGHIGAIDNLALAVERAAVLIENDRLDQFKRQRYAGWDADFGRKILSGDYSLSTLATDALARGLNPQHASGHQELMENIVNQAIYSGR</sequence>